<name>TIM21_YEAST</name>
<gene>
    <name type="primary">TIM21</name>
    <name type="ordered locus">YGR033C</name>
</gene>
<evidence type="ECO:0000255" key="1"/>
<evidence type="ECO:0000269" key="2">
    <source>
    </source>
</evidence>
<evidence type="ECO:0000269" key="3">
    <source>
    </source>
</evidence>
<evidence type="ECO:0000269" key="4">
    <source>
    </source>
</evidence>
<evidence type="ECO:0000269" key="5">
    <source>
    </source>
</evidence>
<evidence type="ECO:0000305" key="6"/>
<evidence type="ECO:0007829" key="7">
    <source>
        <dbReference type="PDB" id="2CIU"/>
    </source>
</evidence>
<evidence type="ECO:0007829" key="8">
    <source>
        <dbReference type="PDB" id="6K7E"/>
    </source>
</evidence>
<evidence type="ECO:0007829" key="9">
    <source>
        <dbReference type="PDB" id="6K7F"/>
    </source>
</evidence>
<accession>P53220</accession>
<accession>D6VUG9</accession>
<accession>Q45U51</accession>
<dbReference type="EMBL" id="DQ115390">
    <property type="protein sequence ID" value="AAZ22448.1"/>
    <property type="molecule type" value="Genomic_DNA"/>
</dbReference>
<dbReference type="EMBL" id="Z72818">
    <property type="protein sequence ID" value="CAA97021.1"/>
    <property type="molecule type" value="Genomic_DNA"/>
</dbReference>
<dbReference type="EMBL" id="BK006941">
    <property type="protein sequence ID" value="DAA08130.1"/>
    <property type="molecule type" value="Genomic_DNA"/>
</dbReference>
<dbReference type="PIR" id="S64324">
    <property type="entry name" value="S64324"/>
</dbReference>
<dbReference type="RefSeq" id="NP_011547.3">
    <property type="nucleotide sequence ID" value="NM_001181162.3"/>
</dbReference>
<dbReference type="PDB" id="2CIU">
    <property type="method" value="X-ray"/>
    <property type="resolution" value="1.60 A"/>
    <property type="chains" value="A=103-225"/>
</dbReference>
<dbReference type="PDB" id="2MF7">
    <property type="method" value="NMR"/>
    <property type="chains" value="A=103-225"/>
</dbReference>
<dbReference type="PDB" id="6K7D">
    <property type="method" value="X-ray"/>
    <property type="resolution" value="2.00 A"/>
    <property type="chains" value="A=105-217"/>
</dbReference>
<dbReference type="PDB" id="6K7E">
    <property type="method" value="X-ray"/>
    <property type="resolution" value="1.53 A"/>
    <property type="chains" value="A=105-217"/>
</dbReference>
<dbReference type="PDB" id="6K7F">
    <property type="method" value="X-ray"/>
    <property type="resolution" value="1.80 A"/>
    <property type="chains" value="A=105-217"/>
</dbReference>
<dbReference type="PDB" id="6K8Q">
    <property type="method" value="NMR"/>
    <property type="chains" value="A=105-217"/>
</dbReference>
<dbReference type="PDBsum" id="2CIU"/>
<dbReference type="PDBsum" id="2MF7"/>
<dbReference type="PDBsum" id="6K7D"/>
<dbReference type="PDBsum" id="6K7E"/>
<dbReference type="PDBsum" id="6K7F"/>
<dbReference type="PDBsum" id="6K8Q"/>
<dbReference type="BMRB" id="P53220"/>
<dbReference type="SMR" id="P53220"/>
<dbReference type="BioGRID" id="33278">
    <property type="interactions" value="184"/>
</dbReference>
<dbReference type="ComplexPortal" id="CPX-6127">
    <property type="entry name" value="TIM23 mitochondrial inner membrane pre-sequence translocase complex, sort variant"/>
</dbReference>
<dbReference type="DIP" id="DIP-3940N"/>
<dbReference type="FunCoup" id="P53220">
    <property type="interactions" value="327"/>
</dbReference>
<dbReference type="IntAct" id="P53220">
    <property type="interactions" value="12"/>
</dbReference>
<dbReference type="MINT" id="P53220"/>
<dbReference type="STRING" id="4932.YGR033C"/>
<dbReference type="TCDB" id="3.A.8.1.1">
    <property type="family name" value="the mitochondrial protein translocase (mpt) family"/>
</dbReference>
<dbReference type="PaxDb" id="4932-YGR033C"/>
<dbReference type="PeptideAtlas" id="P53220"/>
<dbReference type="EnsemblFungi" id="YGR033C_mRNA">
    <property type="protein sequence ID" value="YGR033C"/>
    <property type="gene ID" value="YGR033C"/>
</dbReference>
<dbReference type="GeneID" id="852921"/>
<dbReference type="KEGG" id="sce:YGR033C"/>
<dbReference type="AGR" id="SGD:S000003265"/>
<dbReference type="SGD" id="S000003265">
    <property type="gene designation" value="TIM21"/>
</dbReference>
<dbReference type="VEuPathDB" id="FungiDB:YGR033C"/>
<dbReference type="eggNOG" id="KOG4836">
    <property type="taxonomic scope" value="Eukaryota"/>
</dbReference>
<dbReference type="HOGENOM" id="CLU_089043_1_0_1"/>
<dbReference type="InParanoid" id="P53220"/>
<dbReference type="OMA" id="HVESKQK"/>
<dbReference type="OrthoDB" id="436405at2759"/>
<dbReference type="BioCyc" id="YEAST:G3O-30755-MONOMER"/>
<dbReference type="BioGRID-ORCS" id="852921">
    <property type="hits" value="2 hits in 10 CRISPR screens"/>
</dbReference>
<dbReference type="EvolutionaryTrace" id="P53220"/>
<dbReference type="PRO" id="PR:P53220"/>
<dbReference type="Proteomes" id="UP000002311">
    <property type="component" value="Chromosome VII"/>
</dbReference>
<dbReference type="RNAct" id="P53220">
    <property type="molecule type" value="protein"/>
</dbReference>
<dbReference type="GO" id="GO:0005743">
    <property type="term" value="C:mitochondrial inner membrane"/>
    <property type="evidence" value="ECO:0000304"/>
    <property type="project" value="Reactome"/>
</dbReference>
<dbReference type="GO" id="GO:0005739">
    <property type="term" value="C:mitochondrion"/>
    <property type="evidence" value="ECO:0007005"/>
    <property type="project" value="SGD"/>
</dbReference>
<dbReference type="GO" id="GO:0005744">
    <property type="term" value="C:TIM23 mitochondrial import inner membrane translocase complex"/>
    <property type="evidence" value="ECO:0000314"/>
    <property type="project" value="SGD"/>
</dbReference>
<dbReference type="GO" id="GO:0030150">
    <property type="term" value="P:protein import into mitochondrial matrix"/>
    <property type="evidence" value="ECO:0000315"/>
    <property type="project" value="SGD"/>
</dbReference>
<dbReference type="GO" id="GO:0045039">
    <property type="term" value="P:protein insertion into mitochondrial inner membrane"/>
    <property type="evidence" value="ECO:0000303"/>
    <property type="project" value="ComplexPortal"/>
</dbReference>
<dbReference type="FunFam" id="3.10.450.320:FF:000002">
    <property type="entry name" value="Mitochondrial import inner membrane translocase subunit tim21"/>
    <property type="match status" value="1"/>
</dbReference>
<dbReference type="Gene3D" id="3.10.450.320">
    <property type="entry name" value="Mitochondrial import inner membrane translocase subunit Tim21"/>
    <property type="match status" value="1"/>
</dbReference>
<dbReference type="InterPro" id="IPR013261">
    <property type="entry name" value="Tim21"/>
</dbReference>
<dbReference type="InterPro" id="IPR038552">
    <property type="entry name" value="Tim21_IMS_sf"/>
</dbReference>
<dbReference type="PANTHER" id="PTHR13032">
    <property type="entry name" value="MITOCHONDRIAL IMPORT INNER MEMBRANE TRANSLOCASE SUBUNIT TIM21"/>
    <property type="match status" value="1"/>
</dbReference>
<dbReference type="PANTHER" id="PTHR13032:SF6">
    <property type="entry name" value="MITOCHONDRIAL IMPORT INNER MEMBRANE TRANSLOCASE SUBUNIT TIM21"/>
    <property type="match status" value="1"/>
</dbReference>
<dbReference type="Pfam" id="PF08294">
    <property type="entry name" value="TIM21"/>
    <property type="match status" value="1"/>
</dbReference>
<proteinExistence type="evidence at protein level"/>
<sequence>MSSSLPRSLLRLGHRKPLFPRYNTFVNSSVITHTSLLRTRLYSNGTGATSGKKDDKTRNKPKPLWPQVKSASTFTFSGILVIGAVGISAIVIYLILSELFSPSGDTQLFNRAVSMVEKNKDIRSLLQCDDGITGKERLKAYGELITNDKWTRNRPIVSTKKLDKEGRTHHYMRFHVESKKKIALVHLEAKESKQNYQPDFINMYVDVPGEKRYYLIKPKLHPVSNSKGFLGIRWGPRKD</sequence>
<keyword id="KW-0002">3D-structure</keyword>
<keyword id="KW-0472">Membrane</keyword>
<keyword id="KW-0496">Mitochondrion</keyword>
<keyword id="KW-0999">Mitochondrion inner membrane</keyword>
<keyword id="KW-0653">Protein transport</keyword>
<keyword id="KW-1185">Reference proteome</keyword>
<keyword id="KW-0809">Transit peptide</keyword>
<keyword id="KW-0811">Translocation</keyword>
<keyword id="KW-0812">Transmembrane</keyword>
<keyword id="KW-1133">Transmembrane helix</keyword>
<keyword id="KW-0813">Transport</keyword>
<organism>
    <name type="scientific">Saccharomyces cerevisiae (strain ATCC 204508 / S288c)</name>
    <name type="common">Baker's yeast</name>
    <dbReference type="NCBI Taxonomy" id="559292"/>
    <lineage>
        <taxon>Eukaryota</taxon>
        <taxon>Fungi</taxon>
        <taxon>Dikarya</taxon>
        <taxon>Ascomycota</taxon>
        <taxon>Saccharomycotina</taxon>
        <taxon>Saccharomycetes</taxon>
        <taxon>Saccharomycetales</taxon>
        <taxon>Saccharomycetaceae</taxon>
        <taxon>Saccharomyces</taxon>
    </lineage>
</organism>
<comment type="function">
    <text evidence="4 5">Essential component of the TIM23 complex, a complex that mediates the translocation of transit peptide-containing proteins across the mitochondrial inner membrane. Required to keep the TOM and the TIM23 complexes in close contact. At some point, it is released from the TOM23 complex to allow protein translocation into the mitochondrial matrix. In the complex, it acts as an antagonist of TIM50 by reducing preprotein accumulation at the TOM23 complex and promotes dissociation of the PAM complex from the TIM23 complex.</text>
</comment>
<comment type="subunit">
    <text evidence="4 5">Component of the TIM23 complex, at least composed of TIM23, TIM17, TIM50 and TIM21. Interacts directly with TIM23. Interacts with TOM22 component of the TOM complex. Released from the TOM23 complex by the PAM complex, leading to protein translocation into the mitochondrial matrix.</text>
</comment>
<comment type="interaction">
    <interactant intactId="EBI-23128">
        <id>P53220</id>
    </interactant>
    <interactant intactId="EBI-9132">
        <id>Q12328</id>
        <label>TIM22</label>
    </interactant>
    <organismsDiffer>false</organismsDiffer>
    <experiments>2</experiments>
</comment>
<comment type="interaction">
    <interactant intactId="EBI-23128">
        <id>P53220</id>
    </interactant>
    <interactant intactId="EBI-9136">
        <id>P32897</id>
        <label>TIM23</label>
    </interactant>
    <organismsDiffer>false</organismsDiffer>
    <experiments>16</experiments>
</comment>
<comment type="interaction">
    <interactant intactId="EBI-23128">
        <id>P53220</id>
    </interactant>
    <interactant intactId="EBI-30302">
        <id>Q02776</id>
        <label>TIM50</label>
    </interactant>
    <organismsDiffer>false</organismsDiffer>
    <experiments>10</experiments>
</comment>
<comment type="interaction">
    <interactant intactId="EBI-23128">
        <id>P53220</id>
    </interactant>
    <interactant intactId="EBI-12527">
        <id>P49334</id>
        <label>TOM22</label>
    </interactant>
    <organismsDiffer>false</organismsDiffer>
    <experiments>2</experiments>
</comment>
<comment type="subcellular location">
    <subcellularLocation>
        <location evidence="2 4">Mitochondrion inner membrane</location>
        <topology evidence="2 4">Single-pass membrane protein</topology>
    </subcellularLocation>
</comment>
<comment type="miscellaneous">
    <text evidence="3">Present with 3770 molecules/cell in log phase SD medium.</text>
</comment>
<comment type="similarity">
    <text evidence="6">Belongs to the TIM21 family.</text>
</comment>
<protein>
    <recommendedName>
        <fullName>Mitochondrial import inner membrane translocase subunit TIM21</fullName>
    </recommendedName>
</protein>
<feature type="transit peptide" description="Mitochondrion" evidence="1">
    <location>
        <begin position="1"/>
        <end position="70"/>
    </location>
</feature>
<feature type="chain" id="PRO_0000043166" description="Mitochondrial import inner membrane translocase subunit TIM21">
    <location>
        <begin position="71"/>
        <end position="239"/>
    </location>
</feature>
<feature type="topological domain" description="Mitochondrial matrix" evidence="1">
    <location>
        <begin position="71"/>
        <end position="75"/>
    </location>
</feature>
<feature type="transmembrane region" description="Helical" evidence="1">
    <location>
        <begin position="76"/>
        <end position="96"/>
    </location>
</feature>
<feature type="topological domain" description="Mitochondrial intermembrane" evidence="1">
    <location>
        <begin position="97"/>
        <end position="239"/>
    </location>
</feature>
<feature type="sequence conflict" description="In Ref. 1; AAZ22448." evidence="6" ref="1">
    <original>T</original>
    <variation>A</variation>
    <location>
        <position position="39"/>
    </location>
</feature>
<feature type="helix" evidence="8">
    <location>
        <begin position="105"/>
        <end position="117"/>
    </location>
</feature>
<feature type="helix" evidence="8">
    <location>
        <begin position="120"/>
        <end position="125"/>
    </location>
</feature>
<feature type="strand" evidence="8">
    <location>
        <begin position="139"/>
        <end position="141"/>
    </location>
</feature>
<feature type="strand" evidence="8">
    <location>
        <begin position="144"/>
        <end position="146"/>
    </location>
</feature>
<feature type="strand" evidence="7">
    <location>
        <begin position="151"/>
        <end position="153"/>
    </location>
</feature>
<feature type="strand" evidence="8">
    <location>
        <begin position="158"/>
        <end position="162"/>
    </location>
</feature>
<feature type="strand" evidence="8">
    <location>
        <begin position="168"/>
        <end position="177"/>
    </location>
</feature>
<feature type="strand" evidence="8">
    <location>
        <begin position="182"/>
        <end position="190"/>
    </location>
</feature>
<feature type="strand" evidence="9">
    <location>
        <begin position="193"/>
        <end position="196"/>
    </location>
</feature>
<feature type="strand" evidence="8">
    <location>
        <begin position="199"/>
        <end position="206"/>
    </location>
</feature>
<feature type="strand" evidence="8">
    <location>
        <begin position="213"/>
        <end position="216"/>
    </location>
</feature>
<reference key="1">
    <citation type="submission" date="2005-07" db="EMBL/GenBank/DDBJ databases">
        <title>Molecular genetic dissection of a quantitative trait in yeast.</title>
        <authorList>
            <person name="Deutschbauer A.M."/>
            <person name="Davis R.W."/>
        </authorList>
    </citation>
    <scope>NUCLEOTIDE SEQUENCE [GENOMIC DNA]</scope>
    <source>
        <strain>SK1</strain>
    </source>
</reference>
<reference key="2">
    <citation type="journal article" date="1997" name="Yeast">
        <title>Sequence analysis of 203 kilobases from Saccharomyces cerevisiae chromosome VII.</title>
        <authorList>
            <person name="Rieger M."/>
            <person name="Brueckner M."/>
            <person name="Schaefer M."/>
            <person name="Mueller-Auer S."/>
        </authorList>
    </citation>
    <scope>NUCLEOTIDE SEQUENCE [GENOMIC DNA]</scope>
    <source>
        <strain>ATCC 204508 / S288c</strain>
    </source>
</reference>
<reference key="3">
    <citation type="journal article" date="1997" name="Nature">
        <title>The nucleotide sequence of Saccharomyces cerevisiae chromosome VII.</title>
        <authorList>
            <person name="Tettelin H."/>
            <person name="Agostoni-Carbone M.L."/>
            <person name="Albermann K."/>
            <person name="Albers M."/>
            <person name="Arroyo J."/>
            <person name="Backes U."/>
            <person name="Barreiros T."/>
            <person name="Bertani I."/>
            <person name="Bjourson A.J."/>
            <person name="Brueckner M."/>
            <person name="Bruschi C.V."/>
            <person name="Carignani G."/>
            <person name="Castagnoli L."/>
            <person name="Cerdan E."/>
            <person name="Clemente M.L."/>
            <person name="Coblenz A."/>
            <person name="Coglievina M."/>
            <person name="Coissac E."/>
            <person name="Defoor E."/>
            <person name="Del Bino S."/>
            <person name="Delius H."/>
            <person name="Delneri D."/>
            <person name="de Wergifosse P."/>
            <person name="Dujon B."/>
            <person name="Durand P."/>
            <person name="Entian K.-D."/>
            <person name="Eraso P."/>
            <person name="Escribano V."/>
            <person name="Fabiani L."/>
            <person name="Fartmann B."/>
            <person name="Feroli F."/>
            <person name="Feuermann M."/>
            <person name="Frontali L."/>
            <person name="Garcia-Gonzalez M."/>
            <person name="Garcia-Saez M.I."/>
            <person name="Goffeau A."/>
            <person name="Guerreiro P."/>
            <person name="Hani J."/>
            <person name="Hansen M."/>
            <person name="Hebling U."/>
            <person name="Hernandez K."/>
            <person name="Heumann K."/>
            <person name="Hilger F."/>
            <person name="Hofmann B."/>
            <person name="Indge K.J."/>
            <person name="James C.M."/>
            <person name="Klima R."/>
            <person name="Koetter P."/>
            <person name="Kramer B."/>
            <person name="Kramer W."/>
            <person name="Lauquin G."/>
            <person name="Leuther H."/>
            <person name="Louis E.J."/>
            <person name="Maillier E."/>
            <person name="Marconi A."/>
            <person name="Martegani E."/>
            <person name="Mazon M.J."/>
            <person name="Mazzoni C."/>
            <person name="McReynolds A.D.K."/>
            <person name="Melchioretto P."/>
            <person name="Mewes H.-W."/>
            <person name="Minenkova O."/>
            <person name="Mueller-Auer S."/>
            <person name="Nawrocki A."/>
            <person name="Netter P."/>
            <person name="Neu R."/>
            <person name="Nombela C."/>
            <person name="Oliver S.G."/>
            <person name="Panzeri L."/>
            <person name="Paoluzi S."/>
            <person name="Plevani P."/>
            <person name="Portetelle D."/>
            <person name="Portillo F."/>
            <person name="Potier S."/>
            <person name="Purnelle B."/>
            <person name="Rieger M."/>
            <person name="Riles L."/>
            <person name="Rinaldi T."/>
            <person name="Robben J."/>
            <person name="Rodrigues-Pousada C."/>
            <person name="Rodriguez-Belmonte E."/>
            <person name="Rodriguez-Torres A.M."/>
            <person name="Rose M."/>
            <person name="Ruzzi M."/>
            <person name="Saliola M."/>
            <person name="Sanchez-Perez M."/>
            <person name="Schaefer B."/>
            <person name="Schaefer M."/>
            <person name="Scharfe M."/>
            <person name="Schmidheini T."/>
            <person name="Schreer A."/>
            <person name="Skala J."/>
            <person name="Souciet J.-L."/>
            <person name="Steensma H.Y."/>
            <person name="Talla E."/>
            <person name="Thierry A."/>
            <person name="Vandenbol M."/>
            <person name="van der Aart Q.J.M."/>
            <person name="Van Dyck L."/>
            <person name="Vanoni M."/>
            <person name="Verhasselt P."/>
            <person name="Voet M."/>
            <person name="Volckaert G."/>
            <person name="Wambutt R."/>
            <person name="Watson M.D."/>
            <person name="Weber N."/>
            <person name="Wedler E."/>
            <person name="Wedler H."/>
            <person name="Wipfli P."/>
            <person name="Wolf K."/>
            <person name="Wright L.F."/>
            <person name="Zaccaria P."/>
            <person name="Zimmermann M."/>
            <person name="Zollner A."/>
            <person name="Kleine K."/>
        </authorList>
    </citation>
    <scope>NUCLEOTIDE SEQUENCE [LARGE SCALE GENOMIC DNA]</scope>
    <source>
        <strain>ATCC 204508 / S288c</strain>
    </source>
</reference>
<reference key="4">
    <citation type="journal article" date="2014" name="G3 (Bethesda)">
        <title>The reference genome sequence of Saccharomyces cerevisiae: Then and now.</title>
        <authorList>
            <person name="Engel S.R."/>
            <person name="Dietrich F.S."/>
            <person name="Fisk D.G."/>
            <person name="Binkley G."/>
            <person name="Balakrishnan R."/>
            <person name="Costanzo M.C."/>
            <person name="Dwight S.S."/>
            <person name="Hitz B.C."/>
            <person name="Karra K."/>
            <person name="Nash R.S."/>
            <person name="Weng S."/>
            <person name="Wong E.D."/>
            <person name="Lloyd P."/>
            <person name="Skrzypek M.S."/>
            <person name="Miyasato S.R."/>
            <person name="Simison M."/>
            <person name="Cherry J.M."/>
        </authorList>
    </citation>
    <scope>GENOME REANNOTATION</scope>
    <source>
        <strain>ATCC 204508 / S288c</strain>
    </source>
</reference>
<reference key="5">
    <citation type="journal article" date="2003" name="Nature">
        <title>Global analysis of protein localization in budding yeast.</title>
        <authorList>
            <person name="Huh W.-K."/>
            <person name="Falvo J.V."/>
            <person name="Gerke L.C."/>
            <person name="Carroll A.S."/>
            <person name="Howson R.W."/>
            <person name="Weissman J.S."/>
            <person name="O'Shea E.K."/>
        </authorList>
    </citation>
    <scope>SUBCELLULAR LOCATION [LARGE SCALE ANALYSIS]</scope>
</reference>
<reference key="6">
    <citation type="journal article" date="2003" name="Nature">
        <title>Global analysis of protein expression in yeast.</title>
        <authorList>
            <person name="Ghaemmaghami S."/>
            <person name="Huh W.-K."/>
            <person name="Bower K."/>
            <person name="Howson R.W."/>
            <person name="Belle A."/>
            <person name="Dephoure N."/>
            <person name="O'Shea E.K."/>
            <person name="Weissman J.S."/>
        </authorList>
    </citation>
    <scope>LEVEL OF PROTEIN EXPRESSION [LARGE SCALE ANALYSIS]</scope>
</reference>
<reference key="7">
    <citation type="journal article" date="2005" name="Cell">
        <title>Mitochondrial presequence translocase: switching between TOM tethering and motor recruitment involves Tim21 and Tim17.</title>
        <authorList>
            <person name="Chacinska A."/>
            <person name="Lind M."/>
            <person name="Frazier A.E."/>
            <person name="Dudek J."/>
            <person name="Meisinger C."/>
            <person name="Geissler A."/>
            <person name="Sickmann A."/>
            <person name="Meyer H.E."/>
            <person name="Truscott K.N."/>
            <person name="Guiard B."/>
            <person name="Pfanner N."/>
            <person name="Rehling P."/>
        </authorList>
    </citation>
    <scope>IDENTIFICATION BY MASS SPECTROMETRY</scope>
    <scope>IDENTIFICATION IN THE TIM23 COMPLEX</scope>
    <scope>FUNCTION</scope>
    <scope>SUBCELLULAR LOCATION</scope>
    <scope>TOPOLOGY</scope>
    <scope>INTERACTION WITH TIM23 AND TOM22</scope>
</reference>
<reference key="8">
    <citation type="journal article" date="2005" name="J. Biol. Chem.">
        <title>Role of Tim21 in mitochondrial translocation contact sites.</title>
        <authorList>
            <person name="Mokranjac D."/>
            <person name="Popov-Celeketic D."/>
            <person name="Hell K."/>
            <person name="Neupert W."/>
        </authorList>
    </citation>
    <scope>IDENTIFICATION BY MASS SPECTROMETRY</scope>
    <scope>IDENTIFICATION IN THE TIM23 COMPLEX</scope>
    <scope>FUNCTION</scope>
</reference>